<gene>
    <name type="ordered locus">Meso_1341</name>
</gene>
<proteinExistence type="inferred from homology"/>
<sequence length="199" mass="21334">MAKILVLYYSSWGHMEAMAMAAARGAGEAGANVTIKRVPELVPEEVARKAHYKLEQEAQIATPLELADYDGFIFGVSTRYGMMSSQLKNFLDQTGPLWAAGKLVNKPATVMVSTATQHGGAEIALASTQLALQHHGMIIVPLSYAYQGQSGNDTVRGGAPYGMTTTSDTDGSRMPSAQELEGARFQGKRLAEITAKLVR</sequence>
<reference key="1">
    <citation type="submission" date="2006-06" db="EMBL/GenBank/DDBJ databases">
        <title>Complete sequence of chromosome of Mesorhizobium sp. BNC1.</title>
        <authorList>
            <consortium name="US DOE Joint Genome Institute"/>
            <person name="Copeland A."/>
            <person name="Lucas S."/>
            <person name="Lapidus A."/>
            <person name="Barry K."/>
            <person name="Detter J.C."/>
            <person name="Glavina del Rio T."/>
            <person name="Hammon N."/>
            <person name="Israni S."/>
            <person name="Dalin E."/>
            <person name="Tice H."/>
            <person name="Pitluck S."/>
            <person name="Chertkov O."/>
            <person name="Brettin T."/>
            <person name="Bruce D."/>
            <person name="Han C."/>
            <person name="Tapia R."/>
            <person name="Gilna P."/>
            <person name="Schmutz J."/>
            <person name="Larimer F."/>
            <person name="Land M."/>
            <person name="Hauser L."/>
            <person name="Kyrpides N."/>
            <person name="Mikhailova N."/>
            <person name="Richardson P."/>
        </authorList>
    </citation>
    <scope>NUCLEOTIDE SEQUENCE [LARGE SCALE GENOMIC DNA]</scope>
    <source>
        <strain>BNC1</strain>
    </source>
</reference>
<dbReference type="EC" id="1.6.5.2" evidence="1"/>
<dbReference type="EMBL" id="CP000390">
    <property type="protein sequence ID" value="ABG62737.1"/>
    <property type="molecule type" value="Genomic_DNA"/>
</dbReference>
<dbReference type="SMR" id="Q11IN8"/>
<dbReference type="STRING" id="266779.Meso_1341"/>
<dbReference type="KEGG" id="mes:Meso_1341"/>
<dbReference type="eggNOG" id="COG0655">
    <property type="taxonomic scope" value="Bacteria"/>
</dbReference>
<dbReference type="HOGENOM" id="CLU_051402_0_2_5"/>
<dbReference type="OrthoDB" id="9801479at2"/>
<dbReference type="GO" id="GO:0016020">
    <property type="term" value="C:membrane"/>
    <property type="evidence" value="ECO:0007669"/>
    <property type="project" value="TreeGrafter"/>
</dbReference>
<dbReference type="GO" id="GO:0050660">
    <property type="term" value="F:flavin adenine dinucleotide binding"/>
    <property type="evidence" value="ECO:0007669"/>
    <property type="project" value="UniProtKB-UniRule"/>
</dbReference>
<dbReference type="GO" id="GO:0010181">
    <property type="term" value="F:FMN binding"/>
    <property type="evidence" value="ECO:0007669"/>
    <property type="project" value="InterPro"/>
</dbReference>
<dbReference type="GO" id="GO:0051287">
    <property type="term" value="F:NAD binding"/>
    <property type="evidence" value="ECO:0007669"/>
    <property type="project" value="UniProtKB-UniRule"/>
</dbReference>
<dbReference type="GO" id="GO:0050136">
    <property type="term" value="F:NADH:ubiquinone reductase (non-electrogenic) activity"/>
    <property type="evidence" value="ECO:0007669"/>
    <property type="project" value="RHEA"/>
</dbReference>
<dbReference type="GO" id="GO:0050661">
    <property type="term" value="F:NADP binding"/>
    <property type="evidence" value="ECO:0007669"/>
    <property type="project" value="UniProtKB-UniRule"/>
</dbReference>
<dbReference type="GO" id="GO:0008753">
    <property type="term" value="F:NADPH dehydrogenase (quinone) activity"/>
    <property type="evidence" value="ECO:0007669"/>
    <property type="project" value="RHEA"/>
</dbReference>
<dbReference type="FunFam" id="3.40.50.360:FF:000001">
    <property type="entry name" value="NAD(P)H dehydrogenase (Quinone) FQR1-like"/>
    <property type="match status" value="1"/>
</dbReference>
<dbReference type="Gene3D" id="3.40.50.360">
    <property type="match status" value="1"/>
</dbReference>
<dbReference type="HAMAP" id="MF_01017">
    <property type="entry name" value="NQOR"/>
    <property type="match status" value="1"/>
</dbReference>
<dbReference type="InterPro" id="IPR008254">
    <property type="entry name" value="Flavodoxin/NO_synth"/>
</dbReference>
<dbReference type="InterPro" id="IPR029039">
    <property type="entry name" value="Flavoprotein-like_sf"/>
</dbReference>
<dbReference type="InterPro" id="IPR010089">
    <property type="entry name" value="Flavoprotein_WrbA-like"/>
</dbReference>
<dbReference type="InterPro" id="IPR005025">
    <property type="entry name" value="FMN_Rdtase-like_dom"/>
</dbReference>
<dbReference type="InterPro" id="IPR037513">
    <property type="entry name" value="NQO"/>
</dbReference>
<dbReference type="NCBIfam" id="TIGR01755">
    <property type="entry name" value="flav_wrbA"/>
    <property type="match status" value="1"/>
</dbReference>
<dbReference type="NCBIfam" id="NF002999">
    <property type="entry name" value="PRK03767.1"/>
    <property type="match status" value="1"/>
</dbReference>
<dbReference type="PANTHER" id="PTHR30546">
    <property type="entry name" value="FLAVODOXIN-RELATED PROTEIN WRBA-RELATED"/>
    <property type="match status" value="1"/>
</dbReference>
<dbReference type="PANTHER" id="PTHR30546:SF23">
    <property type="entry name" value="FLAVOPROTEIN-LIKE PROTEIN YCP4-RELATED"/>
    <property type="match status" value="1"/>
</dbReference>
<dbReference type="Pfam" id="PF03358">
    <property type="entry name" value="FMN_red"/>
    <property type="match status" value="1"/>
</dbReference>
<dbReference type="SUPFAM" id="SSF52218">
    <property type="entry name" value="Flavoproteins"/>
    <property type="match status" value="1"/>
</dbReference>
<dbReference type="PROSITE" id="PS50902">
    <property type="entry name" value="FLAVODOXIN_LIKE"/>
    <property type="match status" value="1"/>
</dbReference>
<evidence type="ECO:0000255" key="1">
    <source>
        <dbReference type="HAMAP-Rule" id="MF_01017"/>
    </source>
</evidence>
<evidence type="ECO:0000256" key="2">
    <source>
        <dbReference type="SAM" id="MobiDB-lite"/>
    </source>
</evidence>
<comment type="catalytic activity">
    <reaction evidence="1">
        <text>a quinone + NADH + H(+) = a quinol + NAD(+)</text>
        <dbReference type="Rhea" id="RHEA:46160"/>
        <dbReference type="ChEBI" id="CHEBI:15378"/>
        <dbReference type="ChEBI" id="CHEBI:24646"/>
        <dbReference type="ChEBI" id="CHEBI:57540"/>
        <dbReference type="ChEBI" id="CHEBI:57945"/>
        <dbReference type="ChEBI" id="CHEBI:132124"/>
        <dbReference type="EC" id="1.6.5.2"/>
    </reaction>
</comment>
<comment type="catalytic activity">
    <reaction evidence="1">
        <text>a quinone + NADPH + H(+) = a quinol + NADP(+)</text>
        <dbReference type="Rhea" id="RHEA:46164"/>
        <dbReference type="ChEBI" id="CHEBI:15378"/>
        <dbReference type="ChEBI" id="CHEBI:24646"/>
        <dbReference type="ChEBI" id="CHEBI:57783"/>
        <dbReference type="ChEBI" id="CHEBI:58349"/>
        <dbReference type="ChEBI" id="CHEBI:132124"/>
        <dbReference type="EC" id="1.6.5.2"/>
    </reaction>
</comment>
<comment type="cofactor">
    <cofactor evidence="1">
        <name>FMN</name>
        <dbReference type="ChEBI" id="CHEBI:58210"/>
    </cofactor>
    <text evidence="1">Binds 1 FMN per monomer.</text>
</comment>
<comment type="similarity">
    <text evidence="1">Belongs to the WrbA family.</text>
</comment>
<organism>
    <name type="scientific">Chelativorans sp. (strain BNC1)</name>
    <dbReference type="NCBI Taxonomy" id="266779"/>
    <lineage>
        <taxon>Bacteria</taxon>
        <taxon>Pseudomonadati</taxon>
        <taxon>Pseudomonadota</taxon>
        <taxon>Alphaproteobacteria</taxon>
        <taxon>Hyphomicrobiales</taxon>
        <taxon>Phyllobacteriaceae</taxon>
        <taxon>Chelativorans</taxon>
    </lineage>
</organism>
<protein>
    <recommendedName>
        <fullName evidence="1">NAD(P)H dehydrogenase (quinone)</fullName>
        <ecNumber evidence="1">1.6.5.2</ecNumber>
    </recommendedName>
    <alternativeName>
        <fullName>Flavoprotein WrbA</fullName>
    </alternativeName>
    <alternativeName>
        <fullName evidence="1">NAD(P)H:quinone oxidoreductase</fullName>
        <shortName evidence="1">NQO</shortName>
    </alternativeName>
</protein>
<accession>Q11IN8</accession>
<keyword id="KW-0285">Flavoprotein</keyword>
<keyword id="KW-0288">FMN</keyword>
<keyword id="KW-0520">NAD</keyword>
<keyword id="KW-0521">NADP</keyword>
<keyword id="KW-0547">Nucleotide-binding</keyword>
<keyword id="KW-0560">Oxidoreductase</keyword>
<name>NQOR_CHESB</name>
<feature type="chain" id="PRO_0000291019" description="NAD(P)H dehydrogenase (quinone)">
    <location>
        <begin position="1"/>
        <end position="199"/>
    </location>
</feature>
<feature type="domain" description="Flavodoxin-like" evidence="1">
    <location>
        <begin position="4"/>
        <end position="190"/>
    </location>
</feature>
<feature type="region of interest" description="Disordered" evidence="2">
    <location>
        <begin position="155"/>
        <end position="175"/>
    </location>
</feature>
<feature type="binding site" evidence="1">
    <location>
        <begin position="10"/>
        <end position="15"/>
    </location>
    <ligand>
        <name>FMN</name>
        <dbReference type="ChEBI" id="CHEBI:58210"/>
    </ligand>
</feature>
<feature type="binding site" evidence="1">
    <location>
        <position position="12"/>
    </location>
    <ligand>
        <name>NAD(+)</name>
        <dbReference type="ChEBI" id="CHEBI:57540"/>
    </ligand>
</feature>
<feature type="binding site" evidence="1">
    <location>
        <begin position="78"/>
        <end position="80"/>
    </location>
    <ligand>
        <name>FMN</name>
        <dbReference type="ChEBI" id="CHEBI:58210"/>
    </ligand>
</feature>
<feature type="binding site" evidence="1">
    <location>
        <position position="98"/>
    </location>
    <ligand>
        <name>substrate</name>
    </ligand>
</feature>
<feature type="binding site" evidence="1">
    <location>
        <begin position="113"/>
        <end position="119"/>
    </location>
    <ligand>
        <name>FMN</name>
        <dbReference type="ChEBI" id="CHEBI:58210"/>
    </ligand>
</feature>
<feature type="binding site" evidence="1">
    <location>
        <position position="134"/>
    </location>
    <ligand>
        <name>FMN</name>
        <dbReference type="ChEBI" id="CHEBI:58210"/>
    </ligand>
</feature>